<organism>
    <name type="scientific">Irpex lacteus</name>
    <name type="common">Milk-white toothed polypore</name>
    <name type="synonym">Polyporus tulipiferae</name>
    <dbReference type="NCBI Taxonomy" id="5319"/>
    <lineage>
        <taxon>Eukaryota</taxon>
        <taxon>Fungi</taxon>
        <taxon>Dikarya</taxon>
        <taxon>Basidiomycota</taxon>
        <taxon>Agaricomycotina</taxon>
        <taxon>Agaricomycetes</taxon>
        <taxon>Polyporales</taxon>
        <taxon>Irpicaceae</taxon>
        <taxon>Irpex</taxon>
    </lineage>
</organism>
<protein>
    <recommendedName>
        <fullName>Manganese peroxidase</fullName>
        <ecNumber>1.11.1.13</ecNumber>
    </recommendedName>
    <alternativeName>
        <fullName>Peroxidase manganese-dependent</fullName>
    </alternativeName>
</protein>
<accession>P83918</accession>
<keyword id="KW-0903">Direct protein sequencing</keyword>
<keyword id="KW-0349">Heme</keyword>
<keyword id="KW-0376">Hydrogen peroxide</keyword>
<keyword id="KW-0408">Iron</keyword>
<keyword id="KW-0464">Manganese</keyword>
<keyword id="KW-0479">Metal-binding</keyword>
<keyword id="KW-0560">Oxidoreductase</keyword>
<keyword id="KW-0575">Peroxidase</keyword>
<name>PEM_IRPLA</name>
<reference key="1">
    <citation type="journal article" date="2005" name="J. Microbiol.">
        <title>Purification and characterization of manganese peroxidase of the white-rot fungus Irpex lacteus.</title>
        <authorList>
            <person name="Shin K.-S."/>
            <person name="Kim Y.H."/>
            <person name="Lim J.-S."/>
        </authorList>
    </citation>
    <scope>PROTEIN SEQUENCE</scope>
    <scope>FUNCTION</scope>
    <scope>INDUCTION</scope>
</reference>
<feature type="chain" id="PRO_0000055615" description="Manganese peroxidase">
    <location>
        <begin position="1" status="less than"/>
        <end position="35" status="greater than"/>
    </location>
</feature>
<feature type="region of interest" description="Disordered" evidence="2">
    <location>
        <begin position="1"/>
        <end position="35"/>
    </location>
</feature>
<feature type="compositionally biased region" description="Basic and acidic residues" evidence="2">
    <location>
        <begin position="1"/>
        <end position="11"/>
    </location>
</feature>
<feature type="compositionally biased region" description="Polar residues" evidence="2">
    <location>
        <begin position="18"/>
        <end position="35"/>
    </location>
</feature>
<feature type="non-consecutive residues" evidence="4">
    <location>
        <begin position="9"/>
        <end position="10"/>
    </location>
</feature>
<feature type="non-consecutive residues" evidence="4">
    <location>
        <begin position="24"/>
        <end position="25"/>
    </location>
</feature>
<feature type="non-terminal residue" evidence="4">
    <location>
        <position position="1"/>
    </location>
</feature>
<feature type="non-terminal residue" evidence="4">
    <location>
        <position position="35"/>
    </location>
</feature>
<sequence>LSLLGHDERVTPEPFDSVTAQNARGNQADVQSLPR</sequence>
<dbReference type="EC" id="1.11.1.13"/>
<dbReference type="GO" id="GO:0016689">
    <property type="term" value="F:manganese peroxidase activity"/>
    <property type="evidence" value="ECO:0007669"/>
    <property type="project" value="UniProtKB-EC"/>
</dbReference>
<dbReference type="GO" id="GO:0046872">
    <property type="term" value="F:metal ion binding"/>
    <property type="evidence" value="ECO:0007669"/>
    <property type="project" value="UniProtKB-KW"/>
</dbReference>
<dbReference type="GO" id="GO:0042744">
    <property type="term" value="P:hydrogen peroxide catabolic process"/>
    <property type="evidence" value="ECO:0007669"/>
    <property type="project" value="UniProtKB-KW"/>
</dbReference>
<evidence type="ECO:0000255" key="1">
    <source>
        <dbReference type="PROSITE-ProRule" id="PRU00297"/>
    </source>
</evidence>
<evidence type="ECO:0000256" key="2">
    <source>
        <dbReference type="SAM" id="MobiDB-lite"/>
    </source>
</evidence>
<evidence type="ECO:0000269" key="3">
    <source>
    </source>
</evidence>
<evidence type="ECO:0000305" key="4"/>
<comment type="function">
    <text evidence="3 4">Has manganese peroxidase activity.</text>
</comment>
<comment type="catalytic activity">
    <reaction evidence="4">
        <text>2 Mn(2+) + H2O2 + 2 H(+) = 2 Mn(3+) + 2 H2O</text>
        <dbReference type="Rhea" id="RHEA:22776"/>
        <dbReference type="ChEBI" id="CHEBI:15377"/>
        <dbReference type="ChEBI" id="CHEBI:15378"/>
        <dbReference type="ChEBI" id="CHEBI:16240"/>
        <dbReference type="ChEBI" id="CHEBI:29035"/>
        <dbReference type="ChEBI" id="CHEBI:29041"/>
        <dbReference type="EC" id="1.11.1.13"/>
    </reaction>
</comment>
<comment type="cofactor">
    <cofactor evidence="1">
        <name>heme b</name>
        <dbReference type="ChEBI" id="CHEBI:60344"/>
    </cofactor>
    <text evidence="1">Binds 1 heme b (iron(II)-protoporphyrin IX) group per subunit.</text>
</comment>
<comment type="cofactor">
    <cofactor evidence="1">
        <name>Ca(2+)</name>
        <dbReference type="ChEBI" id="CHEBI:29108"/>
    </cofactor>
    <text evidence="1">Binds 2 calcium ions per subunit.</text>
</comment>
<comment type="induction">
    <text evidence="3 4">By incubation with textile industry wastewater.</text>
</comment>
<comment type="similarity">
    <text evidence="4">Belongs to the peroxidase family.</text>
</comment>
<comment type="caution">
    <text evidence="4">The order of the peptides shown is unknown.</text>
</comment>
<proteinExistence type="evidence at protein level"/>